<proteinExistence type="inferred from homology"/>
<evidence type="ECO:0000255" key="1">
    <source>
        <dbReference type="HAMAP-Rule" id="MF_01864"/>
    </source>
</evidence>
<evidence type="ECO:0000255" key="2">
    <source>
        <dbReference type="PROSITE-ProRule" id="PRU01266"/>
    </source>
</evidence>
<protein>
    <recommendedName>
        <fullName evidence="1">tRNA-2-methylthio-N(6)-dimethylallyladenosine synthase</fullName>
        <ecNumber evidence="1">2.8.4.3</ecNumber>
    </recommendedName>
    <alternativeName>
        <fullName evidence="1">(Dimethylallyl)adenosine tRNA methylthiotransferase MiaB</fullName>
    </alternativeName>
    <alternativeName>
        <fullName evidence="1">tRNA-i(6)A37 methylthiotransferase</fullName>
    </alternativeName>
</protein>
<sequence length="418" mass="47002">MNYLIETIGCQMNVCDSDMLVSIFSAYGASKANNLSEADVVILNTCSVRSQAEQKAFSYLGRVKEFKQKNPCIKIVVIGCMAERLGPNIKKRFSSVDLIIGAKDIGNAALKIMNLFRTDYSAKKVNSEIKSKIVRYITIMRGCDNYCSYCAVPFVRGREVSINCETIVNECSSMVKNGAREIILLGQNVNSYQYEDVNFASLIKKTAAIENLERIRFMTNHPKDLSDDLIKIMATEPKVCPHIHIPMQSASDKILKAMNRKYSYEHYLGLIKKLRTAVPDVSVTTDIIVGFPGETDEDFEDTLKAVKTIRFGGLYVFRYSPRPDTKAAEMIDDVPFEEKKRRHAVVLKESNKISIEIVSEMLGSTQQVLAEEIKNGIIKARTKNGRKVFAEGRKEYIGKHINVNIKEAKINSLFGDIV</sequence>
<comment type="function">
    <text evidence="1">Catalyzes the methylthiolation of N6-(dimethylallyl)adenosine (i(6)A), leading to the formation of 2-methylthio-N6-(dimethylallyl)adenosine (ms(2)i(6)A) at position 37 in tRNAs that read codons beginning with uridine.</text>
</comment>
<comment type="catalytic activity">
    <reaction evidence="1">
        <text>N(6)-dimethylallyladenosine(37) in tRNA + (sulfur carrier)-SH + AH2 + 2 S-adenosyl-L-methionine = 2-methylsulfanyl-N(6)-dimethylallyladenosine(37) in tRNA + (sulfur carrier)-H + 5'-deoxyadenosine + L-methionine + A + S-adenosyl-L-homocysteine + 2 H(+)</text>
        <dbReference type="Rhea" id="RHEA:37067"/>
        <dbReference type="Rhea" id="RHEA-COMP:10375"/>
        <dbReference type="Rhea" id="RHEA-COMP:10376"/>
        <dbReference type="Rhea" id="RHEA-COMP:14737"/>
        <dbReference type="Rhea" id="RHEA-COMP:14739"/>
        <dbReference type="ChEBI" id="CHEBI:13193"/>
        <dbReference type="ChEBI" id="CHEBI:15378"/>
        <dbReference type="ChEBI" id="CHEBI:17319"/>
        <dbReference type="ChEBI" id="CHEBI:17499"/>
        <dbReference type="ChEBI" id="CHEBI:29917"/>
        <dbReference type="ChEBI" id="CHEBI:57844"/>
        <dbReference type="ChEBI" id="CHEBI:57856"/>
        <dbReference type="ChEBI" id="CHEBI:59789"/>
        <dbReference type="ChEBI" id="CHEBI:64428"/>
        <dbReference type="ChEBI" id="CHEBI:74415"/>
        <dbReference type="ChEBI" id="CHEBI:74417"/>
        <dbReference type="EC" id="2.8.4.3"/>
    </reaction>
</comment>
<comment type="cofactor">
    <cofactor evidence="1">
        <name>[4Fe-4S] cluster</name>
        <dbReference type="ChEBI" id="CHEBI:49883"/>
    </cofactor>
    <text evidence="1">Binds 2 [4Fe-4S] clusters. One cluster is coordinated with 3 cysteines and an exchangeable S-adenosyl-L-methionine.</text>
</comment>
<comment type="subunit">
    <text evidence="1">Monomer.</text>
</comment>
<comment type="subcellular location">
    <subcellularLocation>
        <location evidence="1">Cytoplasm</location>
    </subcellularLocation>
</comment>
<comment type="similarity">
    <text evidence="1">Belongs to the methylthiotransferase family. MiaB subfamily.</text>
</comment>
<accession>B1H0D2</accession>
<dbReference type="EC" id="2.8.4.3" evidence="1"/>
<dbReference type="EMBL" id="AP009510">
    <property type="protein sequence ID" value="BAG13964.1"/>
    <property type="molecule type" value="Genomic_DNA"/>
</dbReference>
<dbReference type="RefSeq" id="WP_015423490.1">
    <property type="nucleotide sequence ID" value="NC_020419.1"/>
</dbReference>
<dbReference type="SMR" id="B1H0D2"/>
<dbReference type="STRING" id="471821.TGRD_481"/>
<dbReference type="KEGG" id="rsd:TGRD_481"/>
<dbReference type="PATRIC" id="fig|471821.5.peg.778"/>
<dbReference type="HOGENOM" id="CLU_018697_2_0_0"/>
<dbReference type="Proteomes" id="UP000001691">
    <property type="component" value="Chromosome"/>
</dbReference>
<dbReference type="GO" id="GO:0005829">
    <property type="term" value="C:cytosol"/>
    <property type="evidence" value="ECO:0007669"/>
    <property type="project" value="TreeGrafter"/>
</dbReference>
<dbReference type="GO" id="GO:0051539">
    <property type="term" value="F:4 iron, 4 sulfur cluster binding"/>
    <property type="evidence" value="ECO:0007669"/>
    <property type="project" value="UniProtKB-UniRule"/>
</dbReference>
<dbReference type="GO" id="GO:0046872">
    <property type="term" value="F:metal ion binding"/>
    <property type="evidence" value="ECO:0007669"/>
    <property type="project" value="UniProtKB-KW"/>
</dbReference>
<dbReference type="GO" id="GO:0035597">
    <property type="term" value="F:N6-isopentenyladenosine methylthiotransferase activity"/>
    <property type="evidence" value="ECO:0007669"/>
    <property type="project" value="TreeGrafter"/>
</dbReference>
<dbReference type="CDD" id="cd01335">
    <property type="entry name" value="Radical_SAM"/>
    <property type="match status" value="1"/>
</dbReference>
<dbReference type="FunFam" id="3.40.50.12160:FF:000003">
    <property type="entry name" value="CDK5 regulatory subunit-associated protein 1"/>
    <property type="match status" value="1"/>
</dbReference>
<dbReference type="FunFam" id="3.80.30.20:FF:000001">
    <property type="entry name" value="tRNA-2-methylthio-N(6)-dimethylallyladenosine synthase 2"/>
    <property type="match status" value="1"/>
</dbReference>
<dbReference type="Gene3D" id="3.40.50.12160">
    <property type="entry name" value="Methylthiotransferase, N-terminal domain"/>
    <property type="match status" value="1"/>
</dbReference>
<dbReference type="Gene3D" id="3.80.30.20">
    <property type="entry name" value="tm_1862 like domain"/>
    <property type="match status" value="1"/>
</dbReference>
<dbReference type="HAMAP" id="MF_01864">
    <property type="entry name" value="tRNA_metthiotr_MiaB"/>
    <property type="match status" value="1"/>
</dbReference>
<dbReference type="InterPro" id="IPR006638">
    <property type="entry name" value="Elp3/MiaA/NifB-like_rSAM"/>
</dbReference>
<dbReference type="InterPro" id="IPR005839">
    <property type="entry name" value="Methylthiotransferase"/>
</dbReference>
<dbReference type="InterPro" id="IPR020612">
    <property type="entry name" value="Methylthiotransferase_CS"/>
</dbReference>
<dbReference type="InterPro" id="IPR013848">
    <property type="entry name" value="Methylthiotransferase_N"/>
</dbReference>
<dbReference type="InterPro" id="IPR038135">
    <property type="entry name" value="Methylthiotransferase_N_sf"/>
</dbReference>
<dbReference type="InterPro" id="IPR006463">
    <property type="entry name" value="MiaB_methiolase"/>
</dbReference>
<dbReference type="InterPro" id="IPR007197">
    <property type="entry name" value="rSAM"/>
</dbReference>
<dbReference type="InterPro" id="IPR023404">
    <property type="entry name" value="rSAM_horseshoe"/>
</dbReference>
<dbReference type="InterPro" id="IPR002792">
    <property type="entry name" value="TRAM_dom"/>
</dbReference>
<dbReference type="NCBIfam" id="TIGR01574">
    <property type="entry name" value="miaB-methiolase"/>
    <property type="match status" value="1"/>
</dbReference>
<dbReference type="NCBIfam" id="TIGR00089">
    <property type="entry name" value="MiaB/RimO family radical SAM methylthiotransferase"/>
    <property type="match status" value="1"/>
</dbReference>
<dbReference type="PANTHER" id="PTHR43020">
    <property type="entry name" value="CDK5 REGULATORY SUBUNIT-ASSOCIATED PROTEIN 1"/>
    <property type="match status" value="1"/>
</dbReference>
<dbReference type="PANTHER" id="PTHR43020:SF2">
    <property type="entry name" value="MITOCHONDRIAL TRNA METHYLTHIOTRANSFERASE CDK5RAP1"/>
    <property type="match status" value="1"/>
</dbReference>
<dbReference type="Pfam" id="PF04055">
    <property type="entry name" value="Radical_SAM"/>
    <property type="match status" value="1"/>
</dbReference>
<dbReference type="Pfam" id="PF01938">
    <property type="entry name" value="TRAM"/>
    <property type="match status" value="1"/>
</dbReference>
<dbReference type="Pfam" id="PF00919">
    <property type="entry name" value="UPF0004"/>
    <property type="match status" value="1"/>
</dbReference>
<dbReference type="SFLD" id="SFLDF00273">
    <property type="entry name" value="(dimethylallyl)adenosine_tRNA"/>
    <property type="match status" value="1"/>
</dbReference>
<dbReference type="SFLD" id="SFLDG01082">
    <property type="entry name" value="B12-binding_domain_containing"/>
    <property type="match status" value="1"/>
</dbReference>
<dbReference type="SFLD" id="SFLDG01061">
    <property type="entry name" value="methylthiotransferase"/>
    <property type="match status" value="1"/>
</dbReference>
<dbReference type="SMART" id="SM00729">
    <property type="entry name" value="Elp3"/>
    <property type="match status" value="1"/>
</dbReference>
<dbReference type="SUPFAM" id="SSF102114">
    <property type="entry name" value="Radical SAM enzymes"/>
    <property type="match status" value="1"/>
</dbReference>
<dbReference type="PROSITE" id="PS51449">
    <property type="entry name" value="MTTASE_N"/>
    <property type="match status" value="1"/>
</dbReference>
<dbReference type="PROSITE" id="PS01278">
    <property type="entry name" value="MTTASE_RADICAL"/>
    <property type="match status" value="1"/>
</dbReference>
<dbReference type="PROSITE" id="PS51918">
    <property type="entry name" value="RADICAL_SAM"/>
    <property type="match status" value="1"/>
</dbReference>
<dbReference type="PROSITE" id="PS50926">
    <property type="entry name" value="TRAM"/>
    <property type="match status" value="1"/>
</dbReference>
<organism>
    <name type="scientific">Endomicrobium trichonymphae</name>
    <dbReference type="NCBI Taxonomy" id="1408204"/>
    <lineage>
        <taxon>Bacteria</taxon>
        <taxon>Pseudomonadati</taxon>
        <taxon>Elusimicrobiota</taxon>
        <taxon>Endomicrobiia</taxon>
        <taxon>Endomicrobiales</taxon>
        <taxon>Endomicrobiaceae</taxon>
        <taxon>Candidatus Endomicrobiellum</taxon>
    </lineage>
</organism>
<name>MIAB_ENDTX</name>
<gene>
    <name evidence="1" type="primary">miaB</name>
    <name type="ordered locus">TGRD_481</name>
</gene>
<reference key="1">
    <citation type="journal article" date="2008" name="Proc. Natl. Acad. Sci. U.S.A.">
        <title>Complete genome of the uncultured termite group 1 bacteria in a single host protist cell.</title>
        <authorList>
            <person name="Hongoh Y."/>
            <person name="Sharma V.K."/>
            <person name="Prakash T."/>
            <person name="Noda S."/>
            <person name="Taylor T.D."/>
            <person name="Kudo T."/>
            <person name="Sakaki Y."/>
            <person name="Toyoda A."/>
            <person name="Hattori M."/>
            <person name="Ohkuma M."/>
        </authorList>
    </citation>
    <scope>NUCLEOTIDE SEQUENCE [LARGE SCALE GENOMIC DNA]</scope>
</reference>
<feature type="chain" id="PRO_0000374626" description="tRNA-2-methylthio-N(6)-dimethylallyladenosine synthase">
    <location>
        <begin position="1"/>
        <end position="418"/>
    </location>
</feature>
<feature type="domain" description="MTTase N-terminal" evidence="1">
    <location>
        <begin position="1"/>
        <end position="118"/>
    </location>
</feature>
<feature type="domain" description="Radical SAM core" evidence="2">
    <location>
        <begin position="129"/>
        <end position="356"/>
    </location>
</feature>
<feature type="domain" description="TRAM" evidence="1">
    <location>
        <begin position="359"/>
        <end position="418"/>
    </location>
</feature>
<feature type="binding site" evidence="1">
    <location>
        <position position="10"/>
    </location>
    <ligand>
        <name>[4Fe-4S] cluster</name>
        <dbReference type="ChEBI" id="CHEBI:49883"/>
        <label>1</label>
    </ligand>
</feature>
<feature type="binding site" evidence="1">
    <location>
        <position position="46"/>
    </location>
    <ligand>
        <name>[4Fe-4S] cluster</name>
        <dbReference type="ChEBI" id="CHEBI:49883"/>
        <label>1</label>
    </ligand>
</feature>
<feature type="binding site" evidence="1">
    <location>
        <position position="80"/>
    </location>
    <ligand>
        <name>[4Fe-4S] cluster</name>
        <dbReference type="ChEBI" id="CHEBI:49883"/>
        <label>1</label>
    </ligand>
</feature>
<feature type="binding site" evidence="1">
    <location>
        <position position="143"/>
    </location>
    <ligand>
        <name>[4Fe-4S] cluster</name>
        <dbReference type="ChEBI" id="CHEBI:49883"/>
        <label>2</label>
        <note>4Fe-4S-S-AdoMet</note>
    </ligand>
</feature>
<feature type="binding site" evidence="1">
    <location>
        <position position="147"/>
    </location>
    <ligand>
        <name>[4Fe-4S] cluster</name>
        <dbReference type="ChEBI" id="CHEBI:49883"/>
        <label>2</label>
        <note>4Fe-4S-S-AdoMet</note>
    </ligand>
</feature>
<feature type="binding site" evidence="1">
    <location>
        <position position="150"/>
    </location>
    <ligand>
        <name>[4Fe-4S] cluster</name>
        <dbReference type="ChEBI" id="CHEBI:49883"/>
        <label>2</label>
        <note>4Fe-4S-S-AdoMet</note>
    </ligand>
</feature>
<keyword id="KW-0004">4Fe-4S</keyword>
<keyword id="KW-0963">Cytoplasm</keyword>
<keyword id="KW-0408">Iron</keyword>
<keyword id="KW-0411">Iron-sulfur</keyword>
<keyword id="KW-0479">Metal-binding</keyword>
<keyword id="KW-0949">S-adenosyl-L-methionine</keyword>
<keyword id="KW-0808">Transferase</keyword>
<keyword id="KW-0819">tRNA processing</keyword>